<evidence type="ECO:0000250" key="1"/>
<evidence type="ECO:0000255" key="2"/>
<evidence type="ECO:0000305" key="3"/>
<keyword id="KW-0249">Electron transport</keyword>
<keyword id="KW-0472">Membrane</keyword>
<keyword id="KW-0496">Mitochondrion</keyword>
<keyword id="KW-0999">Mitochondrion inner membrane</keyword>
<keyword id="KW-0520">NAD</keyword>
<keyword id="KW-1185">Reference proteome</keyword>
<keyword id="KW-0679">Respiratory chain</keyword>
<keyword id="KW-1278">Translocase</keyword>
<keyword id="KW-0812">Transmembrane</keyword>
<keyword id="KW-1133">Transmembrane helix</keyword>
<keyword id="KW-0813">Transport</keyword>
<keyword id="KW-0830">Ubiquinone</keyword>
<feature type="chain" id="PRO_0000117641" description="NADH-ubiquinone oxidoreductase chain 2">
    <location>
        <begin position="1"/>
        <end position="352"/>
    </location>
</feature>
<feature type="transmembrane region" description="Helical" evidence="2">
    <location>
        <begin position="4"/>
        <end position="24"/>
    </location>
</feature>
<feature type="transmembrane region" description="Helical" evidence="2">
    <location>
        <begin position="26"/>
        <end position="46"/>
    </location>
</feature>
<feature type="transmembrane region" description="Helical" evidence="2">
    <location>
        <begin position="67"/>
        <end position="87"/>
    </location>
</feature>
<feature type="transmembrane region" description="Helical" evidence="2">
    <location>
        <begin position="96"/>
        <end position="116"/>
    </location>
</feature>
<feature type="transmembrane region" description="Helical" evidence="2">
    <location>
        <begin position="124"/>
        <end position="144"/>
    </location>
</feature>
<feature type="transmembrane region" description="Helical" evidence="2">
    <location>
        <begin position="148"/>
        <end position="168"/>
    </location>
</feature>
<feature type="transmembrane region" description="Helical" evidence="2">
    <location>
        <begin position="177"/>
        <end position="197"/>
    </location>
</feature>
<feature type="transmembrane region" description="Helical" evidence="2">
    <location>
        <begin position="198"/>
        <end position="218"/>
    </location>
</feature>
<feature type="transmembrane region" description="Helical" evidence="2">
    <location>
        <begin position="241"/>
        <end position="261"/>
    </location>
</feature>
<feature type="transmembrane region" description="Helical" evidence="2">
    <location>
        <begin position="264"/>
        <end position="284"/>
    </location>
</feature>
<feature type="transmembrane region" description="Helical" evidence="2">
    <location>
        <begin position="290"/>
        <end position="310"/>
    </location>
</feature>
<feature type="transmembrane region" description="Helical" evidence="2">
    <location>
        <begin position="332"/>
        <end position="352"/>
    </location>
</feature>
<reference key="1">
    <citation type="journal article" date="1988" name="J. Mol. Biol.">
        <title>Nucleotide sequence and gene organization of sea urchin mitochondrial DNA.</title>
        <authorList>
            <person name="Jacobs H.T."/>
            <person name="Elliott D.J."/>
            <person name="Math V.B."/>
            <person name="Farquharson A."/>
        </authorList>
    </citation>
    <scope>NUCLEOTIDE SEQUENCE [GENOMIC DNA]</scope>
</reference>
<proteinExistence type="inferred from homology"/>
<geneLocation type="mitochondrion"/>
<comment type="function">
    <text evidence="1">Core subunit of the mitochondrial membrane respiratory chain NADH dehydrogenase (Complex I) that is believed to belong to the minimal assembly required for catalysis. Complex I functions in the transfer of electrons from NADH to the respiratory chain. The immediate electron acceptor for the enzyme is believed to be ubiquinone (By similarity).</text>
</comment>
<comment type="catalytic activity">
    <reaction>
        <text>a ubiquinone + NADH + 5 H(+)(in) = a ubiquinol + NAD(+) + 4 H(+)(out)</text>
        <dbReference type="Rhea" id="RHEA:29091"/>
        <dbReference type="Rhea" id="RHEA-COMP:9565"/>
        <dbReference type="Rhea" id="RHEA-COMP:9566"/>
        <dbReference type="ChEBI" id="CHEBI:15378"/>
        <dbReference type="ChEBI" id="CHEBI:16389"/>
        <dbReference type="ChEBI" id="CHEBI:17976"/>
        <dbReference type="ChEBI" id="CHEBI:57540"/>
        <dbReference type="ChEBI" id="CHEBI:57945"/>
        <dbReference type="EC" id="7.1.1.2"/>
    </reaction>
</comment>
<comment type="subcellular location">
    <subcellularLocation>
        <location>Mitochondrion inner membrane</location>
        <topology>Multi-pass membrane protein</topology>
    </subcellularLocation>
</comment>
<comment type="similarity">
    <text evidence="3">Belongs to the complex I subunit 2 family.</text>
</comment>
<accession>P15549</accession>
<organism>
    <name type="scientific">Strongylocentrotus purpuratus</name>
    <name type="common">Purple sea urchin</name>
    <dbReference type="NCBI Taxonomy" id="7668"/>
    <lineage>
        <taxon>Eukaryota</taxon>
        <taxon>Metazoa</taxon>
        <taxon>Echinodermata</taxon>
        <taxon>Eleutherozoa</taxon>
        <taxon>Echinozoa</taxon>
        <taxon>Echinoidea</taxon>
        <taxon>Euechinoidea</taxon>
        <taxon>Echinacea</taxon>
        <taxon>Camarodonta</taxon>
        <taxon>Echinidea</taxon>
        <taxon>Strongylocentrotidae</taxon>
        <taxon>Strongylocentrotus</taxon>
    </lineage>
</organism>
<gene>
    <name type="primary">ND2</name>
</gene>
<dbReference type="EC" id="7.1.1.2"/>
<dbReference type="EMBL" id="X12631">
    <property type="protein sequence ID" value="CAA31152.1"/>
    <property type="molecule type" value="Genomic_DNA"/>
</dbReference>
<dbReference type="PIR" id="S01500">
    <property type="entry name" value="S01500"/>
</dbReference>
<dbReference type="RefSeq" id="NP_006966.1">
    <property type="nucleotide sequence ID" value="NC_001453.1"/>
</dbReference>
<dbReference type="SMR" id="P15549"/>
<dbReference type="FunCoup" id="P15549">
    <property type="interactions" value="26"/>
</dbReference>
<dbReference type="STRING" id="7668.P15549"/>
<dbReference type="EnsemblMetazoa" id="GeneID_2652717_df_mr">
    <property type="protein sequence ID" value="NP_006966"/>
    <property type="gene ID" value="GeneID_2652717"/>
</dbReference>
<dbReference type="GeneID" id="2652717"/>
<dbReference type="KEGG" id="spu:2652717"/>
<dbReference type="CTD" id="4536"/>
<dbReference type="InParanoid" id="P15549"/>
<dbReference type="OMA" id="HFWVPEV"/>
<dbReference type="OrthoDB" id="4092844at2759"/>
<dbReference type="PhylomeDB" id="P15549"/>
<dbReference type="Proteomes" id="UP000007110">
    <property type="component" value="Unassembled WGS sequence"/>
</dbReference>
<dbReference type="GO" id="GO:0005743">
    <property type="term" value="C:mitochondrial inner membrane"/>
    <property type="evidence" value="ECO:0007669"/>
    <property type="project" value="UniProtKB-SubCell"/>
</dbReference>
<dbReference type="GO" id="GO:0045271">
    <property type="term" value="C:respiratory chain complex I"/>
    <property type="evidence" value="ECO:0000318"/>
    <property type="project" value="GO_Central"/>
</dbReference>
<dbReference type="GO" id="GO:0008137">
    <property type="term" value="F:NADH dehydrogenase (ubiquinone) activity"/>
    <property type="evidence" value="ECO:0000318"/>
    <property type="project" value="GO_Central"/>
</dbReference>
<dbReference type="GO" id="GO:0006120">
    <property type="term" value="P:mitochondrial electron transport, NADH to ubiquinone"/>
    <property type="evidence" value="ECO:0000318"/>
    <property type="project" value="GO_Central"/>
</dbReference>
<dbReference type="InterPro" id="IPR050175">
    <property type="entry name" value="Complex_I_Subunit_2"/>
</dbReference>
<dbReference type="InterPro" id="IPR010933">
    <property type="entry name" value="NADH_DH_su2_C"/>
</dbReference>
<dbReference type="InterPro" id="IPR003917">
    <property type="entry name" value="NADH_UbQ_OxRdtase_chain2"/>
</dbReference>
<dbReference type="InterPro" id="IPR001750">
    <property type="entry name" value="ND/Mrp_TM"/>
</dbReference>
<dbReference type="PANTHER" id="PTHR46552">
    <property type="entry name" value="NADH-UBIQUINONE OXIDOREDUCTASE CHAIN 2"/>
    <property type="match status" value="1"/>
</dbReference>
<dbReference type="PANTHER" id="PTHR46552:SF1">
    <property type="entry name" value="NADH-UBIQUINONE OXIDOREDUCTASE CHAIN 2"/>
    <property type="match status" value="1"/>
</dbReference>
<dbReference type="Pfam" id="PF06444">
    <property type="entry name" value="NADH_dehy_S2_C"/>
    <property type="match status" value="1"/>
</dbReference>
<dbReference type="Pfam" id="PF00361">
    <property type="entry name" value="Proton_antipo_M"/>
    <property type="match status" value="1"/>
</dbReference>
<dbReference type="PRINTS" id="PR01436">
    <property type="entry name" value="NADHDHGNASE2"/>
</dbReference>
<name>NU2M_STRPU</name>
<sequence>MRQIVSTFLFVTVVSGTIIVVSSENWFIIWVGLELSTLALVPILCSGFSPRNVEADNKYFLVQASSAALLLNGALGQAWLTGSWSILDPVNEVTSICLSIALAFKIGLAPVHFWFPDVLQGLPFFQGLIIATWQKIAPLILMFYFSQLGFSYLLITPSLISVLIGGWGGLNQTQVRKILAFSSIGNMGWLVITSAYSFNAAIIMLVIYLIINTSLFLLFDHLKVSTLGHLNTISQLSPISVALVLLVMLSLGGLPPLTGFILKFTSLYFLVANNFIILSSIMIIGNLQDYFFYLRISFNTSLFLFPQHIISSASWRNSTIISPLAPKAWLSSVSTVLSTLAIPLTLPLYIIT</sequence>
<protein>
    <recommendedName>
        <fullName>NADH-ubiquinone oxidoreductase chain 2</fullName>
        <ecNumber>7.1.1.2</ecNumber>
    </recommendedName>
    <alternativeName>
        <fullName>NADH dehydrogenase subunit 2</fullName>
    </alternativeName>
</protein>